<reference key="1">
    <citation type="journal article" date="2002" name="Nature">
        <title>The genome sequence of Schizosaccharomyces pombe.</title>
        <authorList>
            <person name="Wood V."/>
            <person name="Gwilliam R."/>
            <person name="Rajandream M.A."/>
            <person name="Lyne M.H."/>
            <person name="Lyne R."/>
            <person name="Stewart A."/>
            <person name="Sgouros J.G."/>
            <person name="Peat N."/>
            <person name="Hayles J."/>
            <person name="Baker S.G."/>
            <person name="Basham D."/>
            <person name="Bowman S."/>
            <person name="Brooks K."/>
            <person name="Brown D."/>
            <person name="Brown S."/>
            <person name="Chillingworth T."/>
            <person name="Churcher C.M."/>
            <person name="Collins M."/>
            <person name="Connor R."/>
            <person name="Cronin A."/>
            <person name="Davis P."/>
            <person name="Feltwell T."/>
            <person name="Fraser A."/>
            <person name="Gentles S."/>
            <person name="Goble A."/>
            <person name="Hamlin N."/>
            <person name="Harris D.E."/>
            <person name="Hidalgo J."/>
            <person name="Hodgson G."/>
            <person name="Holroyd S."/>
            <person name="Hornsby T."/>
            <person name="Howarth S."/>
            <person name="Huckle E.J."/>
            <person name="Hunt S."/>
            <person name="Jagels K."/>
            <person name="James K.D."/>
            <person name="Jones L."/>
            <person name="Jones M."/>
            <person name="Leather S."/>
            <person name="McDonald S."/>
            <person name="McLean J."/>
            <person name="Mooney P."/>
            <person name="Moule S."/>
            <person name="Mungall K.L."/>
            <person name="Murphy L.D."/>
            <person name="Niblett D."/>
            <person name="Odell C."/>
            <person name="Oliver K."/>
            <person name="O'Neil S."/>
            <person name="Pearson D."/>
            <person name="Quail M.A."/>
            <person name="Rabbinowitsch E."/>
            <person name="Rutherford K.M."/>
            <person name="Rutter S."/>
            <person name="Saunders D."/>
            <person name="Seeger K."/>
            <person name="Sharp S."/>
            <person name="Skelton J."/>
            <person name="Simmonds M.N."/>
            <person name="Squares R."/>
            <person name="Squares S."/>
            <person name="Stevens K."/>
            <person name="Taylor K."/>
            <person name="Taylor R.G."/>
            <person name="Tivey A."/>
            <person name="Walsh S.V."/>
            <person name="Warren T."/>
            <person name="Whitehead S."/>
            <person name="Woodward J.R."/>
            <person name="Volckaert G."/>
            <person name="Aert R."/>
            <person name="Robben J."/>
            <person name="Grymonprez B."/>
            <person name="Weltjens I."/>
            <person name="Vanstreels E."/>
            <person name="Rieger M."/>
            <person name="Schaefer M."/>
            <person name="Mueller-Auer S."/>
            <person name="Gabel C."/>
            <person name="Fuchs M."/>
            <person name="Duesterhoeft A."/>
            <person name="Fritzc C."/>
            <person name="Holzer E."/>
            <person name="Moestl D."/>
            <person name="Hilbert H."/>
            <person name="Borzym K."/>
            <person name="Langer I."/>
            <person name="Beck A."/>
            <person name="Lehrach H."/>
            <person name="Reinhardt R."/>
            <person name="Pohl T.M."/>
            <person name="Eger P."/>
            <person name="Zimmermann W."/>
            <person name="Wedler H."/>
            <person name="Wambutt R."/>
            <person name="Purnelle B."/>
            <person name="Goffeau A."/>
            <person name="Cadieu E."/>
            <person name="Dreano S."/>
            <person name="Gloux S."/>
            <person name="Lelaure V."/>
            <person name="Mottier S."/>
            <person name="Galibert F."/>
            <person name="Aves S.J."/>
            <person name="Xiang Z."/>
            <person name="Hunt C."/>
            <person name="Moore K."/>
            <person name="Hurst S.M."/>
            <person name="Lucas M."/>
            <person name="Rochet M."/>
            <person name="Gaillardin C."/>
            <person name="Tallada V.A."/>
            <person name="Garzon A."/>
            <person name="Thode G."/>
            <person name="Daga R.R."/>
            <person name="Cruzado L."/>
            <person name="Jimenez J."/>
            <person name="Sanchez M."/>
            <person name="del Rey F."/>
            <person name="Benito J."/>
            <person name="Dominguez A."/>
            <person name="Revuelta J.L."/>
            <person name="Moreno S."/>
            <person name="Armstrong J."/>
            <person name="Forsburg S.L."/>
            <person name="Cerutti L."/>
            <person name="Lowe T."/>
            <person name="McCombie W.R."/>
            <person name="Paulsen I."/>
            <person name="Potashkin J."/>
            <person name="Shpakovski G.V."/>
            <person name="Ussery D."/>
            <person name="Barrell B.G."/>
            <person name="Nurse P."/>
        </authorList>
    </citation>
    <scope>NUCLEOTIDE SEQUENCE [LARGE SCALE GENOMIC DNA]</scope>
    <source>
        <strain>972 / ATCC 24843</strain>
    </source>
</reference>
<reference key="2">
    <citation type="journal article" date="2006" name="Nat. Biotechnol.">
        <title>ORFeome cloning and global analysis of protein localization in the fission yeast Schizosaccharomyces pombe.</title>
        <authorList>
            <person name="Matsuyama A."/>
            <person name="Arai R."/>
            <person name="Yashiroda Y."/>
            <person name="Shirai A."/>
            <person name="Kamata A."/>
            <person name="Sekido S."/>
            <person name="Kobayashi Y."/>
            <person name="Hashimoto A."/>
            <person name="Hamamoto M."/>
            <person name="Hiraoka Y."/>
            <person name="Horinouchi S."/>
            <person name="Yoshida M."/>
        </authorList>
    </citation>
    <scope>SUBCELLULAR LOCATION [LARGE SCALE ANALYSIS]</scope>
</reference>
<name>YNZ6_SCHPO</name>
<gene>
    <name type="ORF">SPBC17G9.06c</name>
</gene>
<feature type="chain" id="PRO_0000353804" description="Putative lysine N-acyltransferase C17G9.06c">
    <location>
        <begin position="1"/>
        <end position="334"/>
    </location>
</feature>
<feature type="active site" description="Proton acceptor" evidence="1">
    <location>
        <position position="286"/>
    </location>
</feature>
<feature type="binding site" evidence="1">
    <location>
        <position position="248"/>
    </location>
    <ligand>
        <name>substrate</name>
    </ligand>
</feature>
<sequence>MSFTVWSKTEPFKLSAVQESLITLEHDNKRLLLTYREESKTWDIDLNGFQDMDVNEILQLAFLSIFYVFPTLRTEVVLQWANIESQKGTLSLPVEYNELEGNVSIDRMSFWQIPSPWMYTRCSDWPLSYLPNQVIRRPKCPKPGSTLYERFIPSLNETLSFVSLDIEQHLQYFHEWQNKPRVEYFWNESGSWDQHHEYLTTLQNDPHSFGVIGCFNDVPFAYFEVYWVPEDRIAPFAQPWHTHDRGFHALVGNDKFRGPHRVPVWLSSITHMLFLDDPRTQRVLLEPRIDNSKFINYLIEENYSKRLEFNFPHKRAAFMEITRNMFFSCLGPRI</sequence>
<keyword id="KW-0012">Acyltransferase</keyword>
<keyword id="KW-0963">Cytoplasm</keyword>
<keyword id="KW-0539">Nucleus</keyword>
<keyword id="KW-1185">Reference proteome</keyword>
<keyword id="KW-0808">Transferase</keyword>
<evidence type="ECO:0000255" key="1"/>
<evidence type="ECO:0000269" key="2">
    <source>
    </source>
</evidence>
<evidence type="ECO:0000305" key="3"/>
<proteinExistence type="inferred from homology"/>
<accession>Q9UUE3</accession>
<protein>
    <recommendedName>
        <fullName>Putative lysine N-acyltransferase C17G9.06c</fullName>
        <ecNumber>2.3.1.-</ecNumber>
    </recommendedName>
</protein>
<organism>
    <name type="scientific">Schizosaccharomyces pombe (strain 972 / ATCC 24843)</name>
    <name type="common">Fission yeast</name>
    <dbReference type="NCBI Taxonomy" id="284812"/>
    <lineage>
        <taxon>Eukaryota</taxon>
        <taxon>Fungi</taxon>
        <taxon>Dikarya</taxon>
        <taxon>Ascomycota</taxon>
        <taxon>Taphrinomycotina</taxon>
        <taxon>Schizosaccharomycetes</taxon>
        <taxon>Schizosaccharomycetales</taxon>
        <taxon>Schizosaccharomycetaceae</taxon>
        <taxon>Schizosaccharomyces</taxon>
    </lineage>
</organism>
<comment type="subcellular location">
    <subcellularLocation>
        <location evidence="2">Cytoplasm</location>
    </subcellularLocation>
    <subcellularLocation>
        <location evidence="2">Nucleus</location>
    </subcellularLocation>
</comment>
<comment type="similarity">
    <text evidence="3">Belongs to the lysine N-acyltransferase mbtK family.</text>
</comment>
<dbReference type="EC" id="2.3.1.-"/>
<dbReference type="EMBL" id="CU329671">
    <property type="protein sequence ID" value="CAB52804.1"/>
    <property type="molecule type" value="Genomic_DNA"/>
</dbReference>
<dbReference type="PIR" id="T39729">
    <property type="entry name" value="T39729"/>
</dbReference>
<dbReference type="SMR" id="Q9UUE3"/>
<dbReference type="BioGRID" id="276710">
    <property type="interactions" value="1"/>
</dbReference>
<dbReference type="STRING" id="284812.Q9UUE3"/>
<dbReference type="iPTMnet" id="Q9UUE3"/>
<dbReference type="PaxDb" id="4896-SPBC17G9.06c.1"/>
<dbReference type="EnsemblFungi" id="SPBC17G9.06c.1">
    <property type="protein sequence ID" value="SPBC17G9.06c.1:pep"/>
    <property type="gene ID" value="SPBC17G9.06c"/>
</dbReference>
<dbReference type="KEGG" id="spo:2540177"/>
<dbReference type="PomBase" id="SPBC17G9.06c"/>
<dbReference type="VEuPathDB" id="FungiDB:SPBC17G9.06c"/>
<dbReference type="eggNOG" id="ENOG502RZMI">
    <property type="taxonomic scope" value="Eukaryota"/>
</dbReference>
<dbReference type="HOGENOM" id="CLU_039848_0_0_1"/>
<dbReference type="InParanoid" id="Q9UUE3"/>
<dbReference type="OMA" id="QPWHTHD"/>
<dbReference type="PhylomeDB" id="Q9UUE3"/>
<dbReference type="PRO" id="PR:Q9UUE3"/>
<dbReference type="Proteomes" id="UP000002485">
    <property type="component" value="Chromosome II"/>
</dbReference>
<dbReference type="GO" id="GO:0005829">
    <property type="term" value="C:cytosol"/>
    <property type="evidence" value="ECO:0007005"/>
    <property type="project" value="PomBase"/>
</dbReference>
<dbReference type="GO" id="GO:0005634">
    <property type="term" value="C:nucleus"/>
    <property type="evidence" value="ECO:0007005"/>
    <property type="project" value="PomBase"/>
</dbReference>
<dbReference type="GO" id="GO:0016410">
    <property type="term" value="F:N-acyltransferase activity"/>
    <property type="evidence" value="ECO:0000318"/>
    <property type="project" value="GO_Central"/>
</dbReference>
<dbReference type="GO" id="GO:0019290">
    <property type="term" value="P:siderophore biosynthetic process"/>
    <property type="evidence" value="ECO:0000255"/>
    <property type="project" value="PomBase"/>
</dbReference>
<dbReference type="FunFam" id="3.40.630.30:FF:000256">
    <property type="entry name" value="Putative lysine N-acyltransferase C17G9.06c"/>
    <property type="match status" value="1"/>
</dbReference>
<dbReference type="Gene3D" id="3.40.630.30">
    <property type="match status" value="1"/>
</dbReference>
<dbReference type="InterPro" id="IPR016181">
    <property type="entry name" value="Acyl_CoA_acyltransferase"/>
</dbReference>
<dbReference type="InterPro" id="IPR019432">
    <property type="entry name" value="Acyltransferase_MbtK/IucB-like"/>
</dbReference>
<dbReference type="PANTHER" id="PTHR31438">
    <property type="entry name" value="LYSINE N-ACYLTRANSFERASE C17G9.06C-RELATED"/>
    <property type="match status" value="1"/>
</dbReference>
<dbReference type="PANTHER" id="PTHR31438:SF1">
    <property type="entry name" value="LYSINE N-ACYLTRANSFERASE C17G9.06C-RELATED"/>
    <property type="match status" value="1"/>
</dbReference>
<dbReference type="Pfam" id="PF13523">
    <property type="entry name" value="Acetyltransf_8"/>
    <property type="match status" value="1"/>
</dbReference>
<dbReference type="SMART" id="SM01006">
    <property type="entry name" value="AlcB"/>
    <property type="match status" value="1"/>
</dbReference>
<dbReference type="SUPFAM" id="SSF55729">
    <property type="entry name" value="Acyl-CoA N-acyltransferases (Nat)"/>
    <property type="match status" value="1"/>
</dbReference>